<keyword id="KW-0063">Aspartyl esterase</keyword>
<keyword id="KW-0134">Cell wall</keyword>
<keyword id="KW-0961">Cell wall biogenesis/degradation</keyword>
<keyword id="KW-1015">Disulfide bond</keyword>
<keyword id="KW-0325">Glycoprotein</keyword>
<keyword id="KW-0378">Hydrolase</keyword>
<keyword id="KW-1185">Reference proteome</keyword>
<keyword id="KW-0964">Secreted</keyword>
<keyword id="KW-0732">Signal</keyword>
<gene>
    <name type="primary">PME42</name>
    <name type="synonym">ARATH42</name>
    <name type="ordered locus">At4g03930</name>
    <name type="ORF">T24M8.6</name>
</gene>
<accession>Q1PEC0</accession>
<accession>A0MF51</accession>
<accession>O81516</accession>
<protein>
    <recommendedName>
        <fullName>Probable pectinesterase/pectinesterase inhibitor 42</fullName>
    </recommendedName>
    <domain>
        <recommendedName>
            <fullName>Pectinesterase inhibitor 42</fullName>
        </recommendedName>
        <alternativeName>
            <fullName>Pectin methylesterase inhibitor 42</fullName>
        </alternativeName>
    </domain>
    <domain>
        <recommendedName>
            <fullName>Pectinesterase 42</fullName>
            <shortName>PE 42</shortName>
            <ecNumber>3.1.1.11</ecNumber>
        </recommendedName>
        <alternativeName>
            <fullName>Pectin methylesterase 42</fullName>
            <shortName>AtPME42</shortName>
        </alternativeName>
    </domain>
</protein>
<proteinExistence type="evidence at transcript level"/>
<evidence type="ECO:0000250" key="1"/>
<evidence type="ECO:0000255" key="2"/>
<evidence type="ECO:0000269" key="3">
    <source>
    </source>
</evidence>
<evidence type="ECO:0000305" key="4"/>
<sequence>MLVKVFSFFILMITMVVIGVSKEYCDDKHSCQNFLLELKTASSSLSEIRRRDLLIIVLKNSVRKIDMAMIGVMEDTKQHEEMENDKLCLKEDTNLFEEMMESAKDRMIRSVEELLGGEFPYLGSYENIHTWLSGVLTSYITCIDEIGDGAYKRRVEPQLQDLISKAKVALALFISISPRDNTELNSVVPNSPSWLSHVDKKDLYLNAEALKKIADVVVAKDGTGKYNTVNAAIAAAPQHSHKRFIIYIKTGIYDEIVAIENTKPNLTLIGDGQDSTIITGNLSASNVRRTFYTATFASNGKGFIGVDMCFRNTVGPAKGPAVALRVSGDMSVIYRCRVEGYQDALYPHIDRQFYRECFITGTVDFICGNAAAVFQFCQIVARQPNMGQSNFITAQSRETKDDKSGFSIQNCNITASSDLDTATVKTYLGRPWRIFSTVAVLQSFIGDLVDPAGWTPWEGETGLSTLHYREYQNRGPGAVTSRRVKWSGFKVMKDPKQATEFTVAKLLDGETWLKESRIPYKSGL</sequence>
<organism>
    <name type="scientific">Arabidopsis thaliana</name>
    <name type="common">Mouse-ear cress</name>
    <dbReference type="NCBI Taxonomy" id="3702"/>
    <lineage>
        <taxon>Eukaryota</taxon>
        <taxon>Viridiplantae</taxon>
        <taxon>Streptophyta</taxon>
        <taxon>Embryophyta</taxon>
        <taxon>Tracheophyta</taxon>
        <taxon>Spermatophyta</taxon>
        <taxon>Magnoliopsida</taxon>
        <taxon>eudicotyledons</taxon>
        <taxon>Gunneridae</taxon>
        <taxon>Pentapetalae</taxon>
        <taxon>rosids</taxon>
        <taxon>malvids</taxon>
        <taxon>Brassicales</taxon>
        <taxon>Brassicaceae</taxon>
        <taxon>Camelineae</taxon>
        <taxon>Arabidopsis</taxon>
    </lineage>
</organism>
<name>PME42_ARATH</name>
<dbReference type="EC" id="3.1.1.11"/>
<dbReference type="EMBL" id="AF077409">
    <property type="protein sequence ID" value="AAC28220.1"/>
    <property type="status" value="ALT_SEQ"/>
    <property type="molecule type" value="Genomic_DNA"/>
</dbReference>
<dbReference type="EMBL" id="AL161498">
    <property type="protein sequence ID" value="CAB80816.1"/>
    <property type="status" value="ALT_SEQ"/>
    <property type="molecule type" value="Genomic_DNA"/>
</dbReference>
<dbReference type="EMBL" id="CP002687">
    <property type="protein sequence ID" value="AEE82356.1"/>
    <property type="molecule type" value="Genomic_DNA"/>
</dbReference>
<dbReference type="EMBL" id="DQ446798">
    <property type="protein sequence ID" value="ABE66043.1"/>
    <property type="molecule type" value="mRNA"/>
</dbReference>
<dbReference type="EMBL" id="DQ653177">
    <property type="protein sequence ID" value="ABK28620.1"/>
    <property type="status" value="ALT_SEQ"/>
    <property type="molecule type" value="mRNA"/>
</dbReference>
<dbReference type="PIR" id="T01870">
    <property type="entry name" value="T01870"/>
</dbReference>
<dbReference type="RefSeq" id="NP_192302.3">
    <property type="nucleotide sequence ID" value="NM_116631.4"/>
</dbReference>
<dbReference type="SMR" id="Q1PEC0"/>
<dbReference type="BioGRID" id="11016">
    <property type="interactions" value="1"/>
</dbReference>
<dbReference type="FunCoup" id="Q1PEC0">
    <property type="interactions" value="131"/>
</dbReference>
<dbReference type="STRING" id="3702.Q1PEC0"/>
<dbReference type="GlyCosmos" id="Q1PEC0">
    <property type="glycosylation" value="3 sites, No reported glycans"/>
</dbReference>
<dbReference type="GlyGen" id="Q1PEC0">
    <property type="glycosylation" value="3 sites"/>
</dbReference>
<dbReference type="PaxDb" id="3702-AT4G03930.1"/>
<dbReference type="ProteomicsDB" id="234784"/>
<dbReference type="EnsemblPlants" id="AT4G03930.1">
    <property type="protein sequence ID" value="AT4G03930.1"/>
    <property type="gene ID" value="AT4G03930"/>
</dbReference>
<dbReference type="GeneID" id="825703"/>
<dbReference type="Gramene" id="AT4G03930.1">
    <property type="protein sequence ID" value="AT4G03930.1"/>
    <property type="gene ID" value="AT4G03930"/>
</dbReference>
<dbReference type="KEGG" id="ath:AT4G03930"/>
<dbReference type="Araport" id="AT4G03930"/>
<dbReference type="TAIR" id="AT4G03930">
    <property type="gene designation" value="PME42"/>
</dbReference>
<dbReference type="eggNOG" id="ENOG502QUQ5">
    <property type="taxonomic scope" value="Eukaryota"/>
</dbReference>
<dbReference type="HOGENOM" id="CLU_012243_9_2_1"/>
<dbReference type="InParanoid" id="Q1PEC0"/>
<dbReference type="OMA" id="YRESYIT"/>
<dbReference type="PhylomeDB" id="Q1PEC0"/>
<dbReference type="BioCyc" id="ARA:AT4G03930-MONOMER"/>
<dbReference type="UniPathway" id="UPA00545">
    <property type="reaction ID" value="UER00823"/>
</dbReference>
<dbReference type="PRO" id="PR:Q1PEC0"/>
<dbReference type="Proteomes" id="UP000006548">
    <property type="component" value="Chromosome 4"/>
</dbReference>
<dbReference type="ExpressionAtlas" id="Q1PEC0">
    <property type="expression patterns" value="baseline and differential"/>
</dbReference>
<dbReference type="GO" id="GO:0005576">
    <property type="term" value="C:extracellular region"/>
    <property type="evidence" value="ECO:0007669"/>
    <property type="project" value="UniProtKB-KW"/>
</dbReference>
<dbReference type="GO" id="GO:0004857">
    <property type="term" value="F:enzyme inhibitor activity"/>
    <property type="evidence" value="ECO:0007669"/>
    <property type="project" value="InterPro"/>
</dbReference>
<dbReference type="GO" id="GO:0030599">
    <property type="term" value="F:pectinesterase activity"/>
    <property type="evidence" value="ECO:0007669"/>
    <property type="project" value="UniProtKB-EC"/>
</dbReference>
<dbReference type="GO" id="GO:0042545">
    <property type="term" value="P:cell wall modification"/>
    <property type="evidence" value="ECO:0007669"/>
    <property type="project" value="InterPro"/>
</dbReference>
<dbReference type="GO" id="GO:0045490">
    <property type="term" value="P:pectin catabolic process"/>
    <property type="evidence" value="ECO:0007669"/>
    <property type="project" value="UniProtKB-UniPathway"/>
</dbReference>
<dbReference type="CDD" id="cd15799">
    <property type="entry name" value="PMEI-like_4"/>
    <property type="match status" value="1"/>
</dbReference>
<dbReference type="FunFam" id="1.20.140.40:FF:000015">
    <property type="entry name" value="Pectinesterase 3"/>
    <property type="match status" value="1"/>
</dbReference>
<dbReference type="FunFam" id="2.160.20.10:FF:000029">
    <property type="entry name" value="Pectinesterase 4"/>
    <property type="match status" value="1"/>
</dbReference>
<dbReference type="Gene3D" id="1.20.140.40">
    <property type="entry name" value="Invertase/pectin methylesterase inhibitor family protein"/>
    <property type="match status" value="1"/>
</dbReference>
<dbReference type="Gene3D" id="2.160.20.10">
    <property type="entry name" value="Single-stranded right-handed beta-helix, Pectin lyase-like"/>
    <property type="match status" value="1"/>
</dbReference>
<dbReference type="InterPro" id="IPR035513">
    <property type="entry name" value="Invertase/methylesterase_inhib"/>
</dbReference>
<dbReference type="InterPro" id="IPR012334">
    <property type="entry name" value="Pectin_lyas_fold"/>
</dbReference>
<dbReference type="InterPro" id="IPR011050">
    <property type="entry name" value="Pectin_lyase_fold/virulence"/>
</dbReference>
<dbReference type="InterPro" id="IPR000070">
    <property type="entry name" value="Pectinesterase_cat"/>
</dbReference>
<dbReference type="InterPro" id="IPR006501">
    <property type="entry name" value="Pectinesterase_inhib_dom"/>
</dbReference>
<dbReference type="InterPro" id="IPR018040">
    <property type="entry name" value="Pectinesterase_Tyr_AS"/>
</dbReference>
<dbReference type="PANTHER" id="PTHR31707">
    <property type="entry name" value="PECTINESTERASE"/>
    <property type="match status" value="1"/>
</dbReference>
<dbReference type="Pfam" id="PF01095">
    <property type="entry name" value="Pectinesterase"/>
    <property type="match status" value="1"/>
</dbReference>
<dbReference type="Pfam" id="PF04043">
    <property type="entry name" value="PMEI"/>
    <property type="match status" value="1"/>
</dbReference>
<dbReference type="SMART" id="SM00856">
    <property type="entry name" value="PMEI"/>
    <property type="match status" value="1"/>
</dbReference>
<dbReference type="SUPFAM" id="SSF51126">
    <property type="entry name" value="Pectin lyase-like"/>
    <property type="match status" value="1"/>
</dbReference>
<dbReference type="SUPFAM" id="SSF101148">
    <property type="entry name" value="Plant invertase/pectin methylesterase inhibitor"/>
    <property type="match status" value="1"/>
</dbReference>
<dbReference type="PROSITE" id="PS00800">
    <property type="entry name" value="PECTINESTERASE_1"/>
    <property type="match status" value="1"/>
</dbReference>
<feature type="signal peptide" evidence="2">
    <location>
        <begin position="1"/>
        <end position="22"/>
    </location>
</feature>
<feature type="chain" id="PRO_0000370185" description="Probable pectinesterase/pectinesterase inhibitor 42">
    <location>
        <begin position="23"/>
        <end position="524"/>
    </location>
</feature>
<feature type="region of interest" description="Pectinesterase inhibitor 42">
    <location>
        <begin position="23"/>
        <end position="172"/>
    </location>
</feature>
<feature type="region of interest" description="Pectinesterase 42">
    <location>
        <begin position="215"/>
        <end position="510"/>
    </location>
</feature>
<feature type="active site" description="Proton donor; for pectinesterase activity" evidence="1">
    <location>
        <position position="343"/>
    </location>
</feature>
<feature type="active site" description="Nucleophile; for pectinesterase activity" evidence="1">
    <location>
        <position position="364"/>
    </location>
</feature>
<feature type="binding site" evidence="1">
    <location>
        <position position="290"/>
    </location>
    <ligand>
        <name>substrate</name>
        <note>for pectinesterase activity</note>
    </ligand>
</feature>
<feature type="binding site" evidence="1">
    <location>
        <position position="430"/>
    </location>
    <ligand>
        <name>substrate</name>
        <note>for pectinesterase activity</note>
    </ligand>
</feature>
<feature type="binding site" evidence="1">
    <location>
        <position position="432"/>
    </location>
    <ligand>
        <name>substrate</name>
        <note>for pectinesterase activity</note>
    </ligand>
</feature>
<feature type="site" description="Transition state stabilizer" evidence="1">
    <location>
        <position position="342"/>
    </location>
</feature>
<feature type="glycosylation site" description="N-linked (GlcNAc...) asparagine" evidence="2">
    <location>
        <position position="265"/>
    </location>
</feature>
<feature type="glycosylation site" description="N-linked (GlcNAc...) asparagine" evidence="2">
    <location>
        <position position="281"/>
    </location>
</feature>
<feature type="glycosylation site" description="N-linked (GlcNAc...) asparagine" evidence="2">
    <location>
        <position position="412"/>
    </location>
</feature>
<feature type="disulfide bond" evidence="1">
    <location>
        <begin position="357"/>
        <end position="377"/>
    </location>
</feature>
<comment type="function">
    <text evidence="1">Acts in the modification of cell walls via demethylesterification of cell wall pectin.</text>
</comment>
<comment type="catalytic activity">
    <reaction>
        <text>[(1-&gt;4)-alpha-D-galacturonosyl methyl ester](n) + n H2O = [(1-&gt;4)-alpha-D-galacturonosyl](n) + n methanol + n H(+)</text>
        <dbReference type="Rhea" id="RHEA:22380"/>
        <dbReference type="Rhea" id="RHEA-COMP:14570"/>
        <dbReference type="Rhea" id="RHEA-COMP:14573"/>
        <dbReference type="ChEBI" id="CHEBI:15377"/>
        <dbReference type="ChEBI" id="CHEBI:15378"/>
        <dbReference type="ChEBI" id="CHEBI:17790"/>
        <dbReference type="ChEBI" id="CHEBI:140522"/>
        <dbReference type="ChEBI" id="CHEBI:140523"/>
        <dbReference type="EC" id="3.1.1.11"/>
    </reaction>
</comment>
<comment type="pathway">
    <text>Glycan metabolism; pectin degradation; 2-dehydro-3-deoxy-D-gluconate from pectin: step 1/5.</text>
</comment>
<comment type="subcellular location">
    <subcellularLocation>
        <location evidence="1">Secreted</location>
        <location evidence="1">Cell wall</location>
    </subcellularLocation>
</comment>
<comment type="tissue specificity">
    <text evidence="3">Expressed in siliques but not in flower buds.</text>
</comment>
<comment type="developmental stage">
    <text evidence="3">Expression restricted to early to mid-stage of silique development.</text>
</comment>
<comment type="miscellaneous">
    <text>The PMEI region may act as an autoinhibitory domain and prevent untimely PME activity during transport.</text>
</comment>
<comment type="similarity">
    <text evidence="4">In the N-terminal section; belongs to the PMEI family.</text>
</comment>
<comment type="similarity">
    <text evidence="4">In the C-terminal section; belongs to the pectinesterase family.</text>
</comment>
<comment type="sequence caution" evidence="4">
    <conflict type="erroneous gene model prediction">
        <sequence resource="EMBL-CDS" id="AAC28220"/>
    </conflict>
</comment>
<comment type="sequence caution" evidence="4">
    <conflict type="erroneous termination">
        <sequence resource="EMBL-CDS" id="ABK28620"/>
    </conflict>
    <text>Extended C-terminus.</text>
</comment>
<comment type="sequence caution" evidence="4">
    <conflict type="erroneous gene model prediction">
        <sequence resource="EMBL-CDS" id="CAB80816"/>
    </conflict>
</comment>
<reference key="1">
    <citation type="journal article" date="1999" name="Nature">
        <title>Sequence and analysis of chromosome 4 of the plant Arabidopsis thaliana.</title>
        <authorList>
            <person name="Mayer K.F.X."/>
            <person name="Schueller C."/>
            <person name="Wambutt R."/>
            <person name="Murphy G."/>
            <person name="Volckaert G."/>
            <person name="Pohl T."/>
            <person name="Duesterhoeft A."/>
            <person name="Stiekema W."/>
            <person name="Entian K.-D."/>
            <person name="Terryn N."/>
            <person name="Harris B."/>
            <person name="Ansorge W."/>
            <person name="Brandt P."/>
            <person name="Grivell L.A."/>
            <person name="Rieger M."/>
            <person name="Weichselgartner M."/>
            <person name="de Simone V."/>
            <person name="Obermaier B."/>
            <person name="Mache R."/>
            <person name="Mueller M."/>
            <person name="Kreis M."/>
            <person name="Delseny M."/>
            <person name="Puigdomenech P."/>
            <person name="Watson M."/>
            <person name="Schmidtheini T."/>
            <person name="Reichert B."/>
            <person name="Portetelle D."/>
            <person name="Perez-Alonso M."/>
            <person name="Boutry M."/>
            <person name="Bancroft I."/>
            <person name="Vos P."/>
            <person name="Hoheisel J."/>
            <person name="Zimmermann W."/>
            <person name="Wedler H."/>
            <person name="Ridley P."/>
            <person name="Langham S.-A."/>
            <person name="McCullagh B."/>
            <person name="Bilham L."/>
            <person name="Robben J."/>
            <person name="van der Schueren J."/>
            <person name="Grymonprez B."/>
            <person name="Chuang Y.-J."/>
            <person name="Vandenbussche F."/>
            <person name="Braeken M."/>
            <person name="Weltjens I."/>
            <person name="Voet M."/>
            <person name="Bastiaens I."/>
            <person name="Aert R."/>
            <person name="Defoor E."/>
            <person name="Weitzenegger T."/>
            <person name="Bothe G."/>
            <person name="Ramsperger U."/>
            <person name="Hilbert H."/>
            <person name="Braun M."/>
            <person name="Holzer E."/>
            <person name="Brandt A."/>
            <person name="Peters S."/>
            <person name="van Staveren M."/>
            <person name="Dirkse W."/>
            <person name="Mooijman P."/>
            <person name="Klein Lankhorst R."/>
            <person name="Rose M."/>
            <person name="Hauf J."/>
            <person name="Koetter P."/>
            <person name="Berneiser S."/>
            <person name="Hempel S."/>
            <person name="Feldpausch M."/>
            <person name="Lamberth S."/>
            <person name="Van den Daele H."/>
            <person name="De Keyser A."/>
            <person name="Buysshaert C."/>
            <person name="Gielen J."/>
            <person name="Villarroel R."/>
            <person name="De Clercq R."/>
            <person name="van Montagu M."/>
            <person name="Rogers J."/>
            <person name="Cronin A."/>
            <person name="Quail M.A."/>
            <person name="Bray-Allen S."/>
            <person name="Clark L."/>
            <person name="Doggett J."/>
            <person name="Hall S."/>
            <person name="Kay M."/>
            <person name="Lennard N."/>
            <person name="McLay K."/>
            <person name="Mayes R."/>
            <person name="Pettett A."/>
            <person name="Rajandream M.A."/>
            <person name="Lyne M."/>
            <person name="Benes V."/>
            <person name="Rechmann S."/>
            <person name="Borkova D."/>
            <person name="Bloecker H."/>
            <person name="Scharfe M."/>
            <person name="Grimm M."/>
            <person name="Loehnert T.-H."/>
            <person name="Dose S."/>
            <person name="de Haan M."/>
            <person name="Maarse A.C."/>
            <person name="Schaefer M."/>
            <person name="Mueller-Auer S."/>
            <person name="Gabel C."/>
            <person name="Fuchs M."/>
            <person name="Fartmann B."/>
            <person name="Granderath K."/>
            <person name="Dauner D."/>
            <person name="Herzl A."/>
            <person name="Neumann S."/>
            <person name="Argiriou A."/>
            <person name="Vitale D."/>
            <person name="Liguori R."/>
            <person name="Piravandi E."/>
            <person name="Massenet O."/>
            <person name="Quigley F."/>
            <person name="Clabauld G."/>
            <person name="Muendlein A."/>
            <person name="Felber R."/>
            <person name="Schnabl S."/>
            <person name="Hiller R."/>
            <person name="Schmidt W."/>
            <person name="Lecharny A."/>
            <person name="Aubourg S."/>
            <person name="Chefdor F."/>
            <person name="Cooke R."/>
            <person name="Berger C."/>
            <person name="Monfort A."/>
            <person name="Casacuberta E."/>
            <person name="Gibbons T."/>
            <person name="Weber N."/>
            <person name="Vandenbol M."/>
            <person name="Bargues M."/>
            <person name="Terol J."/>
            <person name="Torres A."/>
            <person name="Perez-Perez A."/>
            <person name="Purnelle B."/>
            <person name="Bent E."/>
            <person name="Johnson S."/>
            <person name="Tacon D."/>
            <person name="Jesse T."/>
            <person name="Heijnen L."/>
            <person name="Schwarz S."/>
            <person name="Scholler P."/>
            <person name="Heber S."/>
            <person name="Francs P."/>
            <person name="Bielke C."/>
            <person name="Frishman D."/>
            <person name="Haase D."/>
            <person name="Lemcke K."/>
            <person name="Mewes H.-W."/>
            <person name="Stocker S."/>
            <person name="Zaccaria P."/>
            <person name="Bevan M."/>
            <person name="Wilson R.K."/>
            <person name="de la Bastide M."/>
            <person name="Habermann K."/>
            <person name="Parnell L."/>
            <person name="Dedhia N."/>
            <person name="Gnoj L."/>
            <person name="Schutz K."/>
            <person name="Huang E."/>
            <person name="Spiegel L."/>
            <person name="Sekhon M."/>
            <person name="Murray J."/>
            <person name="Sheet P."/>
            <person name="Cordes M."/>
            <person name="Abu-Threideh J."/>
            <person name="Stoneking T."/>
            <person name="Kalicki J."/>
            <person name="Graves T."/>
            <person name="Harmon G."/>
            <person name="Edwards J."/>
            <person name="Latreille P."/>
            <person name="Courtney L."/>
            <person name="Cloud J."/>
            <person name="Abbott A."/>
            <person name="Scott K."/>
            <person name="Johnson D."/>
            <person name="Minx P."/>
            <person name="Bentley D."/>
            <person name="Fulton B."/>
            <person name="Miller N."/>
            <person name="Greco T."/>
            <person name="Kemp K."/>
            <person name="Kramer J."/>
            <person name="Fulton L."/>
            <person name="Mardis E."/>
            <person name="Dante M."/>
            <person name="Pepin K."/>
            <person name="Hillier L.W."/>
            <person name="Nelson J."/>
            <person name="Spieth J."/>
            <person name="Ryan E."/>
            <person name="Andrews S."/>
            <person name="Geisel C."/>
            <person name="Layman D."/>
            <person name="Du H."/>
            <person name="Ali J."/>
            <person name="Berghoff A."/>
            <person name="Jones K."/>
            <person name="Drone K."/>
            <person name="Cotton M."/>
            <person name="Joshu C."/>
            <person name="Antonoiu B."/>
            <person name="Zidanic M."/>
            <person name="Strong C."/>
            <person name="Sun H."/>
            <person name="Lamar B."/>
            <person name="Yordan C."/>
            <person name="Ma P."/>
            <person name="Zhong J."/>
            <person name="Preston R."/>
            <person name="Vil D."/>
            <person name="Shekher M."/>
            <person name="Matero A."/>
            <person name="Shah R."/>
            <person name="Swaby I.K."/>
            <person name="O'Shaughnessy A."/>
            <person name="Rodriguez M."/>
            <person name="Hoffman J."/>
            <person name="Till S."/>
            <person name="Granat S."/>
            <person name="Shohdy N."/>
            <person name="Hasegawa A."/>
            <person name="Hameed A."/>
            <person name="Lodhi M."/>
            <person name="Johnson A."/>
            <person name="Chen E."/>
            <person name="Marra M.A."/>
            <person name="Martienssen R."/>
            <person name="McCombie W.R."/>
        </authorList>
    </citation>
    <scope>NUCLEOTIDE SEQUENCE [LARGE SCALE GENOMIC DNA]</scope>
    <source>
        <strain>cv. Columbia</strain>
    </source>
</reference>
<reference key="2">
    <citation type="journal article" date="2017" name="Plant J.">
        <title>Araport11: a complete reannotation of the Arabidopsis thaliana reference genome.</title>
        <authorList>
            <person name="Cheng C.Y."/>
            <person name="Krishnakumar V."/>
            <person name="Chan A.P."/>
            <person name="Thibaud-Nissen F."/>
            <person name="Schobel S."/>
            <person name="Town C.D."/>
        </authorList>
    </citation>
    <scope>GENOME REANNOTATION</scope>
    <source>
        <strain>cv. Columbia</strain>
    </source>
</reference>
<reference key="3">
    <citation type="journal article" date="2006" name="Plant Biotechnol. J.">
        <title>Simultaneous high-throughput recombinational cloning of open reading frames in closed and open configurations.</title>
        <authorList>
            <person name="Underwood B.A."/>
            <person name="Vanderhaeghen R."/>
            <person name="Whitford R."/>
            <person name="Town C.D."/>
            <person name="Hilson P."/>
        </authorList>
    </citation>
    <scope>NUCLEOTIDE SEQUENCE [LARGE SCALE MRNA]</scope>
    <source>
        <strain>cv. Columbia</strain>
    </source>
</reference>
<reference key="4">
    <citation type="journal article" date="2004" name="Carbohydr. Res.">
        <title>Pectin methylesterases: sequence-structural features and phylogenetic relationships.</title>
        <authorList>
            <person name="Markovic O."/>
            <person name="Janecek S."/>
        </authorList>
    </citation>
    <scope>GENE FAMILY</scope>
    <scope>NOMENCLATURE</scope>
</reference>
<reference key="5">
    <citation type="journal article" date="2006" name="Planta">
        <title>Comprehensive expression profiling of the pectin methylesterase gene family during silique development in Arabidopsis thaliana.</title>
        <authorList>
            <person name="Louvet R."/>
            <person name="Cavel E."/>
            <person name="Gutierrez L."/>
            <person name="Guenin S."/>
            <person name="Roger D."/>
            <person name="Gillet F."/>
            <person name="Guerineau F."/>
            <person name="Pelloux J."/>
        </authorList>
    </citation>
    <scope>TISSUE SPECIFICITY</scope>
    <scope>DEVELOPMENTAL STAGE</scope>
</reference>